<reference key="1">
    <citation type="journal article" date="2011" name="MBio">
        <title>Novel metabolic attributes of the genus Cyanothece, comprising a group of unicellular nitrogen-fixing Cyanobacteria.</title>
        <authorList>
            <person name="Bandyopadhyay A."/>
            <person name="Elvitigala T."/>
            <person name="Welsh E."/>
            <person name="Stockel J."/>
            <person name="Liberton M."/>
            <person name="Min H."/>
            <person name="Sherman L.A."/>
            <person name="Pakrasi H.B."/>
        </authorList>
    </citation>
    <scope>NUCLEOTIDE SEQUENCE [LARGE SCALE GENOMIC DNA]</scope>
    <source>
        <strain>PCC 7424</strain>
    </source>
</reference>
<organism>
    <name type="scientific">Gloeothece citriformis (strain PCC 7424)</name>
    <name type="common">Cyanothece sp. (strain PCC 7424)</name>
    <dbReference type="NCBI Taxonomy" id="65393"/>
    <lineage>
        <taxon>Bacteria</taxon>
        <taxon>Bacillati</taxon>
        <taxon>Cyanobacteriota</taxon>
        <taxon>Cyanophyceae</taxon>
        <taxon>Oscillatoriophycideae</taxon>
        <taxon>Chroococcales</taxon>
        <taxon>Aphanothecaceae</taxon>
        <taxon>Gloeothece</taxon>
        <taxon>Gloeothece citriformis</taxon>
    </lineage>
</organism>
<dbReference type="EC" id="3.5.1.5" evidence="1"/>
<dbReference type="EMBL" id="CP001291">
    <property type="protein sequence ID" value="ACK72776.1"/>
    <property type="molecule type" value="Genomic_DNA"/>
</dbReference>
<dbReference type="RefSeq" id="WP_015956360.1">
    <property type="nucleotide sequence ID" value="NC_011729.1"/>
</dbReference>
<dbReference type="SMR" id="B7K907"/>
<dbReference type="STRING" id="65393.PCC7424_4412"/>
<dbReference type="KEGG" id="cyc:PCC7424_4412"/>
<dbReference type="eggNOG" id="COG0832">
    <property type="taxonomic scope" value="Bacteria"/>
</dbReference>
<dbReference type="HOGENOM" id="CLU_129707_1_1_3"/>
<dbReference type="OrthoDB" id="9797217at2"/>
<dbReference type="UniPathway" id="UPA00258">
    <property type="reaction ID" value="UER00370"/>
</dbReference>
<dbReference type="Proteomes" id="UP000002384">
    <property type="component" value="Chromosome"/>
</dbReference>
<dbReference type="GO" id="GO:0035550">
    <property type="term" value="C:urease complex"/>
    <property type="evidence" value="ECO:0007669"/>
    <property type="project" value="InterPro"/>
</dbReference>
<dbReference type="GO" id="GO:0009039">
    <property type="term" value="F:urease activity"/>
    <property type="evidence" value="ECO:0007669"/>
    <property type="project" value="UniProtKB-UniRule"/>
</dbReference>
<dbReference type="GO" id="GO:0043419">
    <property type="term" value="P:urea catabolic process"/>
    <property type="evidence" value="ECO:0007669"/>
    <property type="project" value="UniProtKB-UniRule"/>
</dbReference>
<dbReference type="CDD" id="cd00407">
    <property type="entry name" value="Urease_beta"/>
    <property type="match status" value="1"/>
</dbReference>
<dbReference type="Gene3D" id="2.10.150.10">
    <property type="entry name" value="Urease, beta subunit"/>
    <property type="match status" value="1"/>
</dbReference>
<dbReference type="HAMAP" id="MF_01954">
    <property type="entry name" value="Urease_beta"/>
    <property type="match status" value="1"/>
</dbReference>
<dbReference type="InterPro" id="IPR002019">
    <property type="entry name" value="Urease_beta-like"/>
</dbReference>
<dbReference type="InterPro" id="IPR036461">
    <property type="entry name" value="Urease_betasu_sf"/>
</dbReference>
<dbReference type="InterPro" id="IPR050069">
    <property type="entry name" value="Urease_subunit"/>
</dbReference>
<dbReference type="NCBIfam" id="NF009682">
    <property type="entry name" value="PRK13203.1"/>
    <property type="match status" value="1"/>
</dbReference>
<dbReference type="NCBIfam" id="TIGR00192">
    <property type="entry name" value="urease_beta"/>
    <property type="match status" value="1"/>
</dbReference>
<dbReference type="PANTHER" id="PTHR33569">
    <property type="entry name" value="UREASE"/>
    <property type="match status" value="1"/>
</dbReference>
<dbReference type="PANTHER" id="PTHR33569:SF1">
    <property type="entry name" value="UREASE"/>
    <property type="match status" value="1"/>
</dbReference>
<dbReference type="Pfam" id="PF00699">
    <property type="entry name" value="Urease_beta"/>
    <property type="match status" value="1"/>
</dbReference>
<dbReference type="SUPFAM" id="SSF51278">
    <property type="entry name" value="Urease, beta-subunit"/>
    <property type="match status" value="1"/>
</dbReference>
<feature type="chain" id="PRO_1000188921" description="Urease subunit beta">
    <location>
        <begin position="1"/>
        <end position="126"/>
    </location>
</feature>
<proteinExistence type="inferred from homology"/>
<protein>
    <recommendedName>
        <fullName evidence="1">Urease subunit beta</fullName>
        <ecNumber evidence="1">3.5.1.5</ecNumber>
    </recommendedName>
    <alternativeName>
        <fullName evidence="1">Urea amidohydrolase subunit beta</fullName>
    </alternativeName>
</protein>
<evidence type="ECO:0000255" key="1">
    <source>
        <dbReference type="HAMAP-Rule" id="MF_01954"/>
    </source>
</evidence>
<accession>B7K907</accession>
<sequence length="126" mass="14183">MIPGEIITLPEDQEIILNAGRPTLDIMVSNKGDRPIQVGSHYHFLEVNEDLEFYEIDSESKNFIFIDRSNLHNKTRGMRLNIPAGTAVRFEPGDIKKVQLVPLAGTREIYGFNGKINGQLDSSVEQ</sequence>
<keyword id="KW-0963">Cytoplasm</keyword>
<keyword id="KW-0378">Hydrolase</keyword>
<keyword id="KW-1185">Reference proteome</keyword>
<name>URE2_GLOC7</name>
<comment type="catalytic activity">
    <reaction evidence="1">
        <text>urea + 2 H2O + H(+) = hydrogencarbonate + 2 NH4(+)</text>
        <dbReference type="Rhea" id="RHEA:20557"/>
        <dbReference type="ChEBI" id="CHEBI:15377"/>
        <dbReference type="ChEBI" id="CHEBI:15378"/>
        <dbReference type="ChEBI" id="CHEBI:16199"/>
        <dbReference type="ChEBI" id="CHEBI:17544"/>
        <dbReference type="ChEBI" id="CHEBI:28938"/>
        <dbReference type="EC" id="3.5.1.5"/>
    </reaction>
</comment>
<comment type="pathway">
    <text evidence="1">Nitrogen metabolism; urea degradation; CO(2) and NH(3) from urea (urease route): step 1/1.</text>
</comment>
<comment type="subunit">
    <text evidence="1">Heterotrimer of UreA (gamma), UreB (beta) and UreC (alpha) subunits. Three heterotrimers associate to form the active enzyme.</text>
</comment>
<comment type="subcellular location">
    <subcellularLocation>
        <location evidence="1">Cytoplasm</location>
    </subcellularLocation>
</comment>
<comment type="similarity">
    <text evidence="1">Belongs to the urease beta subunit family.</text>
</comment>
<gene>
    <name evidence="1" type="primary">ureB</name>
    <name type="ordered locus">PCC7424_4412</name>
</gene>